<evidence type="ECO:0000250" key="1"/>
<evidence type="ECO:0000255" key="2">
    <source>
        <dbReference type="PROSITE-ProRule" id="PRU00258"/>
    </source>
</evidence>
<evidence type="ECO:0000255" key="3">
    <source>
        <dbReference type="PROSITE-ProRule" id="PRU01348"/>
    </source>
</evidence>
<evidence type="ECO:0000255" key="4">
    <source>
        <dbReference type="PROSITE-ProRule" id="PRU01363"/>
    </source>
</evidence>
<comment type="function">
    <text evidence="1">Probable polyketide synthase.</text>
</comment>
<comment type="cofactor">
    <cofactor evidence="1">
        <name>pantetheine 4'-phosphate</name>
        <dbReference type="ChEBI" id="CHEBI:47942"/>
    </cofactor>
    <text evidence="1">Binds 1 phosphopantetheine covalently.</text>
</comment>
<comment type="domain">
    <text evidence="1">Modular protein that is responsible for the completion of one condensation-processing cycle. The beta-ketoacyl synthase region is responsible for the actual condensation reaction while the acyl/malonyl transferase region is responsible for incorporating carboxylic acids units onto an acyl carrier protein (ACP) domain (By similarity).</text>
</comment>
<comment type="miscellaneous">
    <text>Encoded by one of the numerous copies of polyketide synthase genes localized in chromosome 5.</text>
</comment>
<gene>
    <name type="primary">pks26</name>
    <name type="ORF">DDB_G0288457</name>
</gene>
<protein>
    <recommendedName>
        <fullName>Probable polyketide synthase 26</fullName>
        <shortName>dipks26</shortName>
        <ecNumber>2.3.1.-</ecNumber>
    </recommendedName>
</protein>
<proteinExistence type="inferred from homology"/>
<sequence>METNNNKNIQEDIAIIGFRIPGCQDNTPSELWNNLMNKFSGVGKTTERWSDNYHLSGDINNGNSGLLPLKEWKKFDPAFFGINPTMVSTIDPQQRILLKCTWEALEDAGIDPIKLRGSNTSIFIGCSTGDYLDMVKSNNEIQTNLFGSVNHSLSNRISYCFDFHGASMTIDSACSSSLNTVLLGCQSINQGKSNLCIAGGVNFILDTTIPTAFSFLNILSKNGKCMTYDEGADGFVRGEGAGLVVLKSLKDAIKDGNNIYCIIKGGNTNVDGNGNADKANFFQPSKQSQSDNIKLALESIKKKSMLDIDIDYVETHGTGTPTGDPIEVEGISKVFKENHSPENPLLIGSLKSNIGHMEAASGVTSLIKCCLMFKNKSFAPNVNFQKINPKIKLDEWNIKVVTEAIPFKKNKITSMVVNSFGVTGSNCCLVLTESINNNNNSNVDKITKNEKEYLIPFSANSNQSLKNYIEEVSKIDESLQFEDFVYKQLSNKSTSLFQRFVVTSKDWKELKYKLSQPLPLKEISSSISVKKPNPITVFVFCGQGSQFNKMGLELYNNDKNFRNYIDRFDKKLLEYYGYSVISKLRSIDDNDLITIHDPIIAQPATAILQISLFELYKHWGINPSFIVGHSLGELPMAFCSGMIDFDTVCYLLYHRSLAQSKTNGCGKMLSCNISSEEFVKNYSPRYPFLEIACYNSPNSIVVAGKESILLELSKEFKNSGIFCAMLGSLSSFHTSSQLEVKDHIYSLKFESKEPVIPTFSTVTTHLFNSNKLYDNDYIFQNIMKPVLFNETISNLYKHVENNQLGSEMIFIELAPHQTLSFYLKQLIPKDSNYFSNSNSITILSPLHKKKNDYLEIQQTISTCYCKGYDVNFKSQILIESKTNISNKSLPLYQWDDKEFWKDLEKQKRILQGPPMDTLGFSNEKSPILKSFETKIDIKKKPFQYLKGHIVKGKIYFPGVGYIENLLKMYPSQDIDIDSMEFEAPLILIEGIVTCLQSNVYKIGKNEFKVQFHFQDQKTKQWIQSSFANYHLSHRDDFDPTTNKLNIQNLISNNCNLTKLSKNQFYNFIKAKAGLSYNGEFQGVEKCYLGDNCSLVEIPFDTSNQDVETNINMIPILDSCLHGVHILYVEQCQMVLEKIEGLKYYSSTLILSKQKEQQKLYVFTRIENKDLINNSISASIIVMISDGTVFFEIESVSLKSLIPLKDPISIENPTDELFSSYLQSIDSLISEPSSYKSIYKRNEFISSGMSDLSRSDYQQFISTLLYTNLIKRNQSIESDLRNQIEFEEIKAKYCKNSKFERLFTFVIETIKQYDGINGNLNSWNEGNIDIYKILIKSTRIISKLLFPLQGEDTTIDTPQSLFENNLLDDFYNINGNTVIQNQLVGEIITQSIKPLINEKMVFRILEFGGGVGSLSIVTLNKINQLLEQHPNFQIDIEYTWTDISPSFIPDAKKLLSNIKGVTIIYRSLDLEESLIEKQLLKPSYYDFVIMSNVLHVIKEIKFGIDEIYKVLSPNGQLLFIETPYRMLICDSIFGVFDQWWGFTDTGIRVDRCCMKQKTWFKLLSESNYQDIIMSDDIKDCCFVIQAKKPSISSLEYKLKIDSQENDKIIVFGENDTFMKYLENKSTKQIIKIKTCQQFSDLITSNSKEINNQSIIYFIKTLNQLLIENFKEITLEYIQINQLLLSSGLSCKHILLLNQSTSENYLGSSISGAARYFDEFPPLKLYSFDFDKYSLNNESINIIDDIIEPIIKSMNNSNIRKELLVRNNKIFFERYKQEKRIKENYKSTSFENDKSLFVHLNANLEYELKSKQVKLKQNEIEVNVKATGINYKDYLVYTAMTPSELINHKGESNPEFGHDFSGIITRIGDDDGDNDNEFKVGDQVYGIWFNTTASHIIVDKEFLCHKPSKLSHTIASSIPVVYITSLYSLYNIGNIQNDESILIHSASGGIGLSALNILKWKNHKSHIFVTVGSKEKEKYIHDTYGDFITGIYSSRNKDYLKLIKRKLTELGSNKKGVDIILNTLSSSEHMVSNFKCLNHRGRIIDLSITHLNHNEYTCNNNFKYNYGYHNVEVLFVKGDIISKLLKNITSAIENGSLSTGIPIIEFNDSDCFNAIEFINKRQHIGKIVVNHNKENLIQELIKKTNLPIIKSNYQINSDHLGKNILVTGQSGIILEILKWIVKYSTNVENIIILSRSSLKWELELLVNKNKNKLNFIYKSVDVGNSLEIEKVIDEILMENPQINNVDSIFHYAFTQISCKEHEIDQVHLNVSHQAKTMGAINLHNQSIKRNWKLINFIMASSAAGLIGSTDQCSYVCSSNVLDTFSKYRKHVLGLPSICINYGLIESTGFVSRNQSVAVMLDGQGIRPMQTNQILGSLDLFIQNPSKSTNIILTSFNFNEFATGNLQQSNVHKFDFQFNCCLSQKSKLMANNQASENPVKDLLINNICELLSIDESKLNIDIRLIDYGSDSLTIVQIKNLIDKNLLIPNLISIQMLQNNSISDNIKILTDSYNKKKQNEQNELKNIKVGSFTKK</sequence>
<reference key="1">
    <citation type="journal article" date="2005" name="Nature">
        <title>The genome of the social amoeba Dictyostelium discoideum.</title>
        <authorList>
            <person name="Eichinger L."/>
            <person name="Pachebat J.A."/>
            <person name="Gloeckner G."/>
            <person name="Rajandream M.A."/>
            <person name="Sucgang R."/>
            <person name="Berriman M."/>
            <person name="Song J."/>
            <person name="Olsen R."/>
            <person name="Szafranski K."/>
            <person name="Xu Q."/>
            <person name="Tunggal B."/>
            <person name="Kummerfeld S."/>
            <person name="Madera M."/>
            <person name="Konfortov B.A."/>
            <person name="Rivero F."/>
            <person name="Bankier A.T."/>
            <person name="Lehmann R."/>
            <person name="Hamlin N."/>
            <person name="Davies R."/>
            <person name="Gaudet P."/>
            <person name="Fey P."/>
            <person name="Pilcher K."/>
            <person name="Chen G."/>
            <person name="Saunders D."/>
            <person name="Sodergren E.J."/>
            <person name="Davis P."/>
            <person name="Kerhornou A."/>
            <person name="Nie X."/>
            <person name="Hall N."/>
            <person name="Anjard C."/>
            <person name="Hemphill L."/>
            <person name="Bason N."/>
            <person name="Farbrother P."/>
            <person name="Desany B."/>
            <person name="Just E."/>
            <person name="Morio T."/>
            <person name="Rost R."/>
            <person name="Churcher C.M."/>
            <person name="Cooper J."/>
            <person name="Haydock S."/>
            <person name="van Driessche N."/>
            <person name="Cronin A."/>
            <person name="Goodhead I."/>
            <person name="Muzny D.M."/>
            <person name="Mourier T."/>
            <person name="Pain A."/>
            <person name="Lu M."/>
            <person name="Harper D."/>
            <person name="Lindsay R."/>
            <person name="Hauser H."/>
            <person name="James K.D."/>
            <person name="Quiles M."/>
            <person name="Madan Babu M."/>
            <person name="Saito T."/>
            <person name="Buchrieser C."/>
            <person name="Wardroper A."/>
            <person name="Felder M."/>
            <person name="Thangavelu M."/>
            <person name="Johnson D."/>
            <person name="Knights A."/>
            <person name="Loulseged H."/>
            <person name="Mungall K.L."/>
            <person name="Oliver K."/>
            <person name="Price C."/>
            <person name="Quail M.A."/>
            <person name="Urushihara H."/>
            <person name="Hernandez J."/>
            <person name="Rabbinowitsch E."/>
            <person name="Steffen D."/>
            <person name="Sanders M."/>
            <person name="Ma J."/>
            <person name="Kohara Y."/>
            <person name="Sharp S."/>
            <person name="Simmonds M.N."/>
            <person name="Spiegler S."/>
            <person name="Tivey A."/>
            <person name="Sugano S."/>
            <person name="White B."/>
            <person name="Walker D."/>
            <person name="Woodward J.R."/>
            <person name="Winckler T."/>
            <person name="Tanaka Y."/>
            <person name="Shaulsky G."/>
            <person name="Schleicher M."/>
            <person name="Weinstock G.M."/>
            <person name="Rosenthal A."/>
            <person name="Cox E.C."/>
            <person name="Chisholm R.L."/>
            <person name="Gibbs R.A."/>
            <person name="Loomis W.F."/>
            <person name="Platzer M."/>
            <person name="Kay R.R."/>
            <person name="Williams J.G."/>
            <person name="Dear P.H."/>
            <person name="Noegel A.A."/>
            <person name="Barrell B.G."/>
            <person name="Kuspa A."/>
        </authorList>
    </citation>
    <scope>NUCLEOTIDE SEQUENCE [LARGE SCALE GENOMIC DNA]</scope>
    <source>
        <strain>AX4</strain>
    </source>
</reference>
<reference key="2">
    <citation type="journal article" date="2007" name="Bioinformatics">
        <title>Polyketide synthase genes and the natural products potential of Dictyostelium discoideum.</title>
        <authorList>
            <person name="Zucko J."/>
            <person name="Skunca N."/>
            <person name="Curk T."/>
            <person name="Zupan B."/>
            <person name="Long P.F."/>
            <person name="Cullum J."/>
            <person name="Kessin R.H."/>
            <person name="Hranueli D."/>
        </authorList>
    </citation>
    <scope>IDENTIFICATION</scope>
</reference>
<keyword id="KW-0596">Phosphopantetheine</keyword>
<keyword id="KW-0597">Phosphoprotein</keyword>
<keyword id="KW-1185">Reference proteome</keyword>
<keyword id="KW-0808">Transferase</keyword>
<accession>Q54IX3</accession>
<feature type="chain" id="PRO_0000371388" description="Probable polyketide synthase 26">
    <location>
        <begin position="1"/>
        <end position="2531"/>
    </location>
</feature>
<feature type="domain" description="Ketosynthase family 3 (KS3)" evidence="3">
    <location>
        <begin position="10"/>
        <end position="433"/>
    </location>
</feature>
<feature type="domain" description="PKS/mFAS DH" evidence="4">
    <location>
        <begin position="915"/>
        <end position="1206"/>
    </location>
</feature>
<feature type="domain" description="Carrier" evidence="2">
    <location>
        <begin position="2431"/>
        <end position="2509"/>
    </location>
</feature>
<feature type="region of interest" description="Acyl/malonyl transferase">
    <location>
        <begin position="620"/>
        <end position="653"/>
    </location>
</feature>
<feature type="region of interest" description="N-terminal hotdog fold" evidence="4">
    <location>
        <begin position="915"/>
        <end position="1036"/>
    </location>
</feature>
<feature type="region of interest" description="C-terminal hotdog fold" evidence="4">
    <location>
        <begin position="1055"/>
        <end position="1206"/>
    </location>
</feature>
<feature type="active site" description="For beta-ketoacyl synthase activity" evidence="3">
    <location>
        <position position="174"/>
    </location>
</feature>
<feature type="active site" description="For beta-ketoacyl synthase activity" evidence="3">
    <location>
        <position position="316"/>
    </location>
</feature>
<feature type="active site" description="For beta-ketoacyl synthase activity" evidence="3">
    <location>
        <position position="356"/>
    </location>
</feature>
<feature type="active site" description="For acyl/malonyl transferase activity" evidence="1">
    <location>
        <position position="630"/>
    </location>
</feature>
<feature type="active site" description="Proton acceptor; for dehydratase activity" evidence="4">
    <location>
        <position position="948"/>
    </location>
</feature>
<feature type="active site" description="Proton donor; for dehydratase activity" evidence="4">
    <location>
        <position position="1117"/>
    </location>
</feature>
<feature type="modified residue" description="O-(pantetheine 4'-phosphoryl)serine" evidence="2">
    <location>
        <position position="2468"/>
    </location>
</feature>
<dbReference type="EC" id="2.3.1.-"/>
<dbReference type="EMBL" id="AAFI02000111">
    <property type="protein sequence ID" value="EAL63254.1"/>
    <property type="molecule type" value="Genomic_DNA"/>
</dbReference>
<dbReference type="RefSeq" id="XP_636757.1">
    <property type="nucleotide sequence ID" value="XM_631665.1"/>
</dbReference>
<dbReference type="SMR" id="Q54IX3"/>
<dbReference type="FunCoup" id="Q54IX3">
    <property type="interactions" value="1"/>
</dbReference>
<dbReference type="STRING" id="44689.Q54IX3"/>
<dbReference type="GlyGen" id="Q54IX3">
    <property type="glycosylation" value="1 site"/>
</dbReference>
<dbReference type="PaxDb" id="44689-DDB0235218"/>
<dbReference type="EnsemblProtists" id="EAL63254">
    <property type="protein sequence ID" value="EAL63254"/>
    <property type="gene ID" value="DDB_G0288457"/>
</dbReference>
<dbReference type="GeneID" id="8626635"/>
<dbReference type="KEGG" id="ddi:DDB_G0288457"/>
<dbReference type="dictyBase" id="DDB_G0288457">
    <property type="gene designation" value="pks26"/>
</dbReference>
<dbReference type="VEuPathDB" id="AmoebaDB:DDB_G0288457"/>
<dbReference type="eggNOG" id="KOG1202">
    <property type="taxonomic scope" value="Eukaryota"/>
</dbReference>
<dbReference type="HOGENOM" id="CLU_000022_31_0_1"/>
<dbReference type="InParanoid" id="Q54IX3"/>
<dbReference type="PhylomeDB" id="Q54IX3"/>
<dbReference type="PRO" id="PR:Q54IX3"/>
<dbReference type="Proteomes" id="UP000002195">
    <property type="component" value="Chromosome 5"/>
</dbReference>
<dbReference type="GO" id="GO:0016746">
    <property type="term" value="F:acyltransferase activity"/>
    <property type="evidence" value="ECO:0007669"/>
    <property type="project" value="InterPro"/>
</dbReference>
<dbReference type="GO" id="GO:0016491">
    <property type="term" value="F:oxidoreductase activity"/>
    <property type="evidence" value="ECO:0007669"/>
    <property type="project" value="InterPro"/>
</dbReference>
<dbReference type="GO" id="GO:0006633">
    <property type="term" value="P:fatty acid biosynthetic process"/>
    <property type="evidence" value="ECO:0000318"/>
    <property type="project" value="GO_Central"/>
</dbReference>
<dbReference type="CDD" id="cd02440">
    <property type="entry name" value="AdoMet_MTases"/>
    <property type="match status" value="1"/>
</dbReference>
<dbReference type="CDD" id="cd05195">
    <property type="entry name" value="enoyl_red"/>
    <property type="match status" value="1"/>
</dbReference>
<dbReference type="CDD" id="cd08954">
    <property type="entry name" value="KR_1_FAS_SDR_x"/>
    <property type="match status" value="1"/>
</dbReference>
<dbReference type="CDD" id="cd00833">
    <property type="entry name" value="PKS"/>
    <property type="match status" value="1"/>
</dbReference>
<dbReference type="Gene3D" id="3.40.47.10">
    <property type="match status" value="1"/>
</dbReference>
<dbReference type="Gene3D" id="3.40.366.10">
    <property type="entry name" value="Malonyl-Coenzyme A Acyl Carrier Protein, domain 2"/>
    <property type="match status" value="1"/>
</dbReference>
<dbReference type="Gene3D" id="3.90.180.10">
    <property type="entry name" value="Medium-chain alcohol dehydrogenases, catalytic domain"/>
    <property type="match status" value="1"/>
</dbReference>
<dbReference type="Gene3D" id="3.40.50.720">
    <property type="entry name" value="NAD(P)-binding Rossmann-like Domain"/>
    <property type="match status" value="2"/>
</dbReference>
<dbReference type="Gene3D" id="3.10.129.110">
    <property type="entry name" value="Polyketide synthase dehydratase"/>
    <property type="match status" value="1"/>
</dbReference>
<dbReference type="Gene3D" id="3.40.50.150">
    <property type="entry name" value="Vaccinia Virus protein VP39"/>
    <property type="match status" value="1"/>
</dbReference>
<dbReference type="InterPro" id="IPR001227">
    <property type="entry name" value="Ac_transferase_dom_sf"/>
</dbReference>
<dbReference type="InterPro" id="IPR036736">
    <property type="entry name" value="ACP-like_sf"/>
</dbReference>
<dbReference type="InterPro" id="IPR014043">
    <property type="entry name" value="Acyl_transferase_dom"/>
</dbReference>
<dbReference type="InterPro" id="IPR016035">
    <property type="entry name" value="Acyl_Trfase/lysoPLipase"/>
</dbReference>
<dbReference type="InterPro" id="IPR013154">
    <property type="entry name" value="ADH-like_N"/>
</dbReference>
<dbReference type="InterPro" id="IPR011032">
    <property type="entry name" value="GroES-like_sf"/>
</dbReference>
<dbReference type="InterPro" id="IPR014031">
    <property type="entry name" value="Ketoacyl_synth_C"/>
</dbReference>
<dbReference type="InterPro" id="IPR014030">
    <property type="entry name" value="Ketoacyl_synth_N"/>
</dbReference>
<dbReference type="InterPro" id="IPR016036">
    <property type="entry name" value="Malonyl_transacylase_ACP-bd"/>
</dbReference>
<dbReference type="InterPro" id="IPR013217">
    <property type="entry name" value="Methyltransf_12"/>
</dbReference>
<dbReference type="InterPro" id="IPR036291">
    <property type="entry name" value="NAD(P)-bd_dom_sf"/>
</dbReference>
<dbReference type="InterPro" id="IPR032821">
    <property type="entry name" value="PKS_assoc"/>
</dbReference>
<dbReference type="InterPro" id="IPR020841">
    <property type="entry name" value="PKS_Beta-ketoAc_synthase_dom"/>
</dbReference>
<dbReference type="InterPro" id="IPR042104">
    <property type="entry name" value="PKS_dehydratase_sf"/>
</dbReference>
<dbReference type="InterPro" id="IPR049551">
    <property type="entry name" value="PKS_DH_C"/>
</dbReference>
<dbReference type="InterPro" id="IPR020843">
    <property type="entry name" value="PKS_ER"/>
</dbReference>
<dbReference type="InterPro" id="IPR013968">
    <property type="entry name" value="PKS_KR"/>
</dbReference>
<dbReference type="InterPro" id="IPR049900">
    <property type="entry name" value="PKS_mFAS_DH"/>
</dbReference>
<dbReference type="InterPro" id="IPR050444">
    <property type="entry name" value="Polyketide_Synthase"/>
</dbReference>
<dbReference type="InterPro" id="IPR009081">
    <property type="entry name" value="PP-bd_ACP"/>
</dbReference>
<dbReference type="InterPro" id="IPR029063">
    <property type="entry name" value="SAM-dependent_MTases_sf"/>
</dbReference>
<dbReference type="InterPro" id="IPR016039">
    <property type="entry name" value="Thiolase-like"/>
</dbReference>
<dbReference type="PANTHER" id="PTHR45681:SF4">
    <property type="entry name" value="BETA-KETOACYL SYNTHASE FAMILY PROTEIN-RELATED"/>
    <property type="match status" value="1"/>
</dbReference>
<dbReference type="PANTHER" id="PTHR45681">
    <property type="entry name" value="POLYKETIDE SYNTHASE 44-RELATED"/>
    <property type="match status" value="1"/>
</dbReference>
<dbReference type="Pfam" id="PF23297">
    <property type="entry name" value="ACP_SdgA_C"/>
    <property type="match status" value="1"/>
</dbReference>
<dbReference type="Pfam" id="PF00698">
    <property type="entry name" value="Acyl_transf_1"/>
    <property type="match status" value="1"/>
</dbReference>
<dbReference type="Pfam" id="PF08240">
    <property type="entry name" value="ADH_N"/>
    <property type="match status" value="1"/>
</dbReference>
<dbReference type="Pfam" id="PF16197">
    <property type="entry name" value="KAsynt_C_assoc"/>
    <property type="match status" value="1"/>
</dbReference>
<dbReference type="Pfam" id="PF00109">
    <property type="entry name" value="ketoacyl-synt"/>
    <property type="match status" value="1"/>
</dbReference>
<dbReference type="Pfam" id="PF02801">
    <property type="entry name" value="Ketoacyl-synt_C"/>
    <property type="match status" value="1"/>
</dbReference>
<dbReference type="Pfam" id="PF08659">
    <property type="entry name" value="KR"/>
    <property type="match status" value="1"/>
</dbReference>
<dbReference type="Pfam" id="PF08242">
    <property type="entry name" value="Methyltransf_12"/>
    <property type="match status" value="1"/>
</dbReference>
<dbReference type="Pfam" id="PF14765">
    <property type="entry name" value="PS-DH"/>
    <property type="match status" value="1"/>
</dbReference>
<dbReference type="SMART" id="SM00827">
    <property type="entry name" value="PKS_AT"/>
    <property type="match status" value="1"/>
</dbReference>
<dbReference type="SMART" id="SM00829">
    <property type="entry name" value="PKS_ER"/>
    <property type="match status" value="1"/>
</dbReference>
<dbReference type="SMART" id="SM00822">
    <property type="entry name" value="PKS_KR"/>
    <property type="match status" value="1"/>
</dbReference>
<dbReference type="SMART" id="SM00825">
    <property type="entry name" value="PKS_KS"/>
    <property type="match status" value="1"/>
</dbReference>
<dbReference type="SUPFAM" id="SSF47336">
    <property type="entry name" value="ACP-like"/>
    <property type="match status" value="1"/>
</dbReference>
<dbReference type="SUPFAM" id="SSF52151">
    <property type="entry name" value="FabD/lysophospholipase-like"/>
    <property type="match status" value="1"/>
</dbReference>
<dbReference type="SUPFAM" id="SSF50129">
    <property type="entry name" value="GroES-like"/>
    <property type="match status" value="1"/>
</dbReference>
<dbReference type="SUPFAM" id="SSF51735">
    <property type="entry name" value="NAD(P)-binding Rossmann-fold domains"/>
    <property type="match status" value="2"/>
</dbReference>
<dbReference type="SUPFAM" id="SSF55048">
    <property type="entry name" value="Probable ACP-binding domain of malonyl-CoA ACP transacylase"/>
    <property type="match status" value="1"/>
</dbReference>
<dbReference type="SUPFAM" id="SSF53335">
    <property type="entry name" value="S-adenosyl-L-methionine-dependent methyltransferases"/>
    <property type="match status" value="1"/>
</dbReference>
<dbReference type="SUPFAM" id="SSF53901">
    <property type="entry name" value="Thiolase-like"/>
    <property type="match status" value="1"/>
</dbReference>
<dbReference type="PROSITE" id="PS50075">
    <property type="entry name" value="CARRIER"/>
    <property type="match status" value="1"/>
</dbReference>
<dbReference type="PROSITE" id="PS52004">
    <property type="entry name" value="KS3_2"/>
    <property type="match status" value="1"/>
</dbReference>
<dbReference type="PROSITE" id="PS52019">
    <property type="entry name" value="PKS_MFAS_DH"/>
    <property type="match status" value="1"/>
</dbReference>
<name>PKS26_DICDI</name>
<organism>
    <name type="scientific">Dictyostelium discoideum</name>
    <name type="common">Social amoeba</name>
    <dbReference type="NCBI Taxonomy" id="44689"/>
    <lineage>
        <taxon>Eukaryota</taxon>
        <taxon>Amoebozoa</taxon>
        <taxon>Evosea</taxon>
        <taxon>Eumycetozoa</taxon>
        <taxon>Dictyostelia</taxon>
        <taxon>Dictyosteliales</taxon>
        <taxon>Dictyosteliaceae</taxon>
        <taxon>Dictyostelium</taxon>
    </lineage>
</organism>